<organism>
    <name type="scientific">Trichophyton verrucosum (strain HKI 0517)</name>
    <dbReference type="NCBI Taxonomy" id="663202"/>
    <lineage>
        <taxon>Eukaryota</taxon>
        <taxon>Fungi</taxon>
        <taxon>Dikarya</taxon>
        <taxon>Ascomycota</taxon>
        <taxon>Pezizomycotina</taxon>
        <taxon>Eurotiomycetes</taxon>
        <taxon>Eurotiomycetidae</taxon>
        <taxon>Onygenales</taxon>
        <taxon>Arthrodermataceae</taxon>
        <taxon>Trichophyton</taxon>
    </lineage>
</organism>
<evidence type="ECO:0000255" key="1">
    <source>
        <dbReference type="HAMAP-Rule" id="MF_03175"/>
    </source>
</evidence>
<evidence type="ECO:0000256" key="2">
    <source>
        <dbReference type="SAM" id="MobiDB-lite"/>
    </source>
</evidence>
<evidence type="ECO:0000305" key="3"/>
<feature type="chain" id="PRO_0000407670" description="Methionine aminopeptidase 2">
    <location>
        <begin position="1"/>
        <end position="449"/>
    </location>
</feature>
<feature type="region of interest" description="Disordered" evidence="2">
    <location>
        <begin position="1"/>
        <end position="91"/>
    </location>
</feature>
<feature type="compositionally biased region" description="Acidic residues" evidence="2">
    <location>
        <begin position="34"/>
        <end position="50"/>
    </location>
</feature>
<feature type="compositionally biased region" description="Basic residues" evidence="2">
    <location>
        <begin position="61"/>
        <end position="75"/>
    </location>
</feature>
<feature type="binding site" evidence="1">
    <location>
        <position position="199"/>
    </location>
    <ligand>
        <name>substrate</name>
    </ligand>
</feature>
<feature type="binding site" evidence="1">
    <location>
        <position position="219"/>
    </location>
    <ligand>
        <name>a divalent metal cation</name>
        <dbReference type="ChEBI" id="CHEBI:60240"/>
        <label>1</label>
    </ligand>
</feature>
<feature type="binding site" evidence="1">
    <location>
        <position position="230"/>
    </location>
    <ligand>
        <name>a divalent metal cation</name>
        <dbReference type="ChEBI" id="CHEBI:60240"/>
        <label>1</label>
    </ligand>
</feature>
<feature type="binding site" evidence="1">
    <location>
        <position position="230"/>
    </location>
    <ligand>
        <name>a divalent metal cation</name>
        <dbReference type="ChEBI" id="CHEBI:60240"/>
        <label>2</label>
        <note>catalytic</note>
    </ligand>
</feature>
<feature type="binding site" evidence="1">
    <location>
        <position position="299"/>
    </location>
    <ligand>
        <name>a divalent metal cation</name>
        <dbReference type="ChEBI" id="CHEBI:60240"/>
        <label>2</label>
        <note>catalytic</note>
    </ligand>
</feature>
<feature type="binding site" evidence="1">
    <location>
        <position position="307"/>
    </location>
    <ligand>
        <name>substrate</name>
    </ligand>
</feature>
<feature type="binding site" evidence="1">
    <location>
        <position position="335"/>
    </location>
    <ligand>
        <name>a divalent metal cation</name>
        <dbReference type="ChEBI" id="CHEBI:60240"/>
        <label>2</label>
        <note>catalytic</note>
    </ligand>
</feature>
<feature type="binding site" evidence="1">
    <location>
        <position position="430"/>
    </location>
    <ligand>
        <name>a divalent metal cation</name>
        <dbReference type="ChEBI" id="CHEBI:60240"/>
        <label>1</label>
    </ligand>
</feature>
<feature type="binding site" evidence="1">
    <location>
        <position position="430"/>
    </location>
    <ligand>
        <name>a divalent metal cation</name>
        <dbReference type="ChEBI" id="CHEBI:60240"/>
        <label>2</label>
        <note>catalytic</note>
    </ligand>
</feature>
<accession>D4DE65</accession>
<protein>
    <recommendedName>
        <fullName evidence="1">Methionine aminopeptidase 2</fullName>
        <shortName evidence="1">MAP 2</shortName>
        <shortName evidence="1">MetAP 2</shortName>
        <ecNumber evidence="1">3.4.11.18</ecNumber>
    </recommendedName>
    <alternativeName>
        <fullName evidence="1">Peptidase M</fullName>
    </alternativeName>
</protein>
<keyword id="KW-0031">Aminopeptidase</keyword>
<keyword id="KW-0963">Cytoplasm</keyword>
<keyword id="KW-0378">Hydrolase</keyword>
<keyword id="KW-0479">Metal-binding</keyword>
<keyword id="KW-0645">Protease</keyword>
<reference key="1">
    <citation type="journal article" date="2011" name="Genome Biol.">
        <title>Comparative and functional genomics provide insights into the pathogenicity of dermatophytic fungi.</title>
        <authorList>
            <person name="Burmester A."/>
            <person name="Shelest E."/>
            <person name="Gloeckner G."/>
            <person name="Heddergott C."/>
            <person name="Schindler S."/>
            <person name="Staib P."/>
            <person name="Heidel A."/>
            <person name="Felder M."/>
            <person name="Petzold A."/>
            <person name="Szafranski K."/>
            <person name="Feuermann M."/>
            <person name="Pedruzzi I."/>
            <person name="Priebe S."/>
            <person name="Groth M."/>
            <person name="Winkler R."/>
            <person name="Li W."/>
            <person name="Kniemeyer O."/>
            <person name="Schroeckh V."/>
            <person name="Hertweck C."/>
            <person name="Hube B."/>
            <person name="White T.C."/>
            <person name="Platzer M."/>
            <person name="Guthke R."/>
            <person name="Heitman J."/>
            <person name="Woestemeyer J."/>
            <person name="Zipfel P.F."/>
            <person name="Monod M."/>
            <person name="Brakhage A.A."/>
        </authorList>
    </citation>
    <scope>NUCLEOTIDE SEQUENCE [LARGE SCALE GENOMIC DNA]</scope>
    <source>
        <strain>HKI 0517</strain>
    </source>
</reference>
<comment type="function">
    <text evidence="1">Cotranslationally removes the N-terminal methionine from nascent proteins. The N-terminal methionine is often cleaved when the second residue in the primary sequence is small and uncharged (Met-Ala-, Cys, Gly, Pro, Ser, Thr, or Val).</text>
</comment>
<comment type="catalytic activity">
    <reaction evidence="1">
        <text>Release of N-terminal amino acids, preferentially methionine, from peptides and arylamides.</text>
        <dbReference type="EC" id="3.4.11.18"/>
    </reaction>
</comment>
<comment type="cofactor">
    <cofactor evidence="1">
        <name>Co(2+)</name>
        <dbReference type="ChEBI" id="CHEBI:48828"/>
    </cofactor>
    <cofactor evidence="1">
        <name>Zn(2+)</name>
        <dbReference type="ChEBI" id="CHEBI:29105"/>
    </cofactor>
    <cofactor evidence="1">
        <name>Mn(2+)</name>
        <dbReference type="ChEBI" id="CHEBI:29035"/>
    </cofactor>
    <cofactor evidence="1">
        <name>Fe(2+)</name>
        <dbReference type="ChEBI" id="CHEBI:29033"/>
    </cofactor>
    <text evidence="1">Binds 2 divalent metal cations per subunit. Has a high-affinity and a low affinity metal-binding site. The true nature of the physiological cofactor is under debate. The enzyme is active with cobalt, zinc, manganese or divalent iron ions. Most likely, methionine aminopeptidases function as mononuclear Fe(2+)-metalloproteases under physiological conditions, and the catalytically relevant metal-binding site has been assigned to the histidine-containing high-affinity site.</text>
</comment>
<comment type="subcellular location">
    <subcellularLocation>
        <location evidence="1">Cytoplasm</location>
    </subcellularLocation>
</comment>
<comment type="similarity">
    <text evidence="1">Belongs to the peptidase M24A family. Methionine aminopeptidase eukaryotic type 2 subfamily.</text>
</comment>
<comment type="sequence caution" evidence="3">
    <conflict type="erroneous gene model prediction">
        <sequence resource="EMBL-CDS" id="EFE39847"/>
    </conflict>
</comment>
<name>MAP2_TRIVH</name>
<gene>
    <name type="ORF">TRV_05431</name>
</gene>
<proteinExistence type="inferred from homology"/>
<sequence length="449" mass="49232">MAAQAAPELAKLDLNKNTGSVEANAVSAGGSEKEEAENEGDSEDDRDDEQAGGSAEVNAEKKKKKKRPKKKKKTAKVQSSPPRIPLTTLFPNNNFPEGEIVEYLNENSYRTTNEEKRHLDRMNNDFLTEYRQAAEIHRQVRQYAQKELIKPGATLTDIAEGIEDGVRHLTGHMGLEEGDSLVAGMGFPTGLNINHCAAHYSPNAGNKVVLQHGDVMKVDFGVHINGRIVDSAFTVAFDPVFDPLLTAVKEATNTGIKEAGIDVRMSDIGAAIQETMESYELELNGTSYPIKAIRNLNGHTIGQYEIHGGVNGKSVPIVKGGDQTKMEEGETYAIETFGSTGKGYVRDDMETSHYAKVPNAPSVPLRLSSAKNLYSLINKNFGTLPFCRRYLDRLGQEKYLLGLNNLVSSGLVDAYPPLCDVKGSYTAQFEHTILLRPNVKEVISRGDDY</sequence>
<dbReference type="EC" id="3.4.11.18" evidence="1"/>
<dbReference type="EMBL" id="ACYE01000286">
    <property type="protein sequence ID" value="EFE39847.1"/>
    <property type="status" value="ALT_SEQ"/>
    <property type="molecule type" value="Genomic_DNA"/>
</dbReference>
<dbReference type="RefSeq" id="XP_003020465.1">
    <property type="nucleotide sequence ID" value="XM_003020419.1"/>
</dbReference>
<dbReference type="SMR" id="D4DE65"/>
<dbReference type="MEROPS" id="M24.A02"/>
<dbReference type="GeneID" id="9584204"/>
<dbReference type="KEGG" id="tve:TRV_05431"/>
<dbReference type="HOGENOM" id="CLU_015857_7_1_1"/>
<dbReference type="OrthoDB" id="3608at34384"/>
<dbReference type="Proteomes" id="UP000008383">
    <property type="component" value="Unassembled WGS sequence"/>
</dbReference>
<dbReference type="GO" id="GO:0005737">
    <property type="term" value="C:cytoplasm"/>
    <property type="evidence" value="ECO:0007669"/>
    <property type="project" value="UniProtKB-SubCell"/>
</dbReference>
<dbReference type="GO" id="GO:0004239">
    <property type="term" value="F:initiator methionyl aminopeptidase activity"/>
    <property type="evidence" value="ECO:0007669"/>
    <property type="project" value="UniProtKB-UniRule"/>
</dbReference>
<dbReference type="GO" id="GO:0046872">
    <property type="term" value="F:metal ion binding"/>
    <property type="evidence" value="ECO:0007669"/>
    <property type="project" value="UniProtKB-UniRule"/>
</dbReference>
<dbReference type="GO" id="GO:0070006">
    <property type="term" value="F:metalloaminopeptidase activity"/>
    <property type="evidence" value="ECO:0007669"/>
    <property type="project" value="UniProtKB-UniRule"/>
</dbReference>
<dbReference type="GO" id="GO:0006508">
    <property type="term" value="P:proteolysis"/>
    <property type="evidence" value="ECO:0007669"/>
    <property type="project" value="UniProtKB-KW"/>
</dbReference>
<dbReference type="CDD" id="cd01088">
    <property type="entry name" value="MetAP2"/>
    <property type="match status" value="1"/>
</dbReference>
<dbReference type="Gene3D" id="3.90.230.10">
    <property type="entry name" value="Creatinase/methionine aminopeptidase superfamily"/>
    <property type="match status" value="1"/>
</dbReference>
<dbReference type="Gene3D" id="1.10.10.10">
    <property type="entry name" value="Winged helix-like DNA-binding domain superfamily/Winged helix DNA-binding domain"/>
    <property type="match status" value="1"/>
</dbReference>
<dbReference type="HAMAP" id="MF_03175">
    <property type="entry name" value="MetAP_2_euk"/>
    <property type="match status" value="1"/>
</dbReference>
<dbReference type="InterPro" id="IPR036005">
    <property type="entry name" value="Creatinase/aminopeptidase-like"/>
</dbReference>
<dbReference type="InterPro" id="IPR050247">
    <property type="entry name" value="Met_Aminopeptidase_Type2"/>
</dbReference>
<dbReference type="InterPro" id="IPR000994">
    <property type="entry name" value="Pept_M24"/>
</dbReference>
<dbReference type="InterPro" id="IPR001714">
    <property type="entry name" value="Pept_M24_MAP"/>
</dbReference>
<dbReference type="InterPro" id="IPR002468">
    <property type="entry name" value="Pept_M24A_MAP2"/>
</dbReference>
<dbReference type="InterPro" id="IPR018349">
    <property type="entry name" value="Pept_M24A_MAP2_BS"/>
</dbReference>
<dbReference type="InterPro" id="IPR036388">
    <property type="entry name" value="WH-like_DNA-bd_sf"/>
</dbReference>
<dbReference type="InterPro" id="IPR036390">
    <property type="entry name" value="WH_DNA-bd_sf"/>
</dbReference>
<dbReference type="NCBIfam" id="TIGR00501">
    <property type="entry name" value="met_pdase_II"/>
    <property type="match status" value="1"/>
</dbReference>
<dbReference type="PANTHER" id="PTHR45777">
    <property type="entry name" value="METHIONINE AMINOPEPTIDASE 2"/>
    <property type="match status" value="1"/>
</dbReference>
<dbReference type="PANTHER" id="PTHR45777:SF2">
    <property type="entry name" value="METHIONINE AMINOPEPTIDASE 2"/>
    <property type="match status" value="1"/>
</dbReference>
<dbReference type="Pfam" id="PF00557">
    <property type="entry name" value="Peptidase_M24"/>
    <property type="match status" value="1"/>
</dbReference>
<dbReference type="PRINTS" id="PR00599">
    <property type="entry name" value="MAPEPTIDASE"/>
</dbReference>
<dbReference type="SUPFAM" id="SSF55920">
    <property type="entry name" value="Creatinase/aminopeptidase"/>
    <property type="match status" value="1"/>
</dbReference>
<dbReference type="SUPFAM" id="SSF46785">
    <property type="entry name" value="Winged helix' DNA-binding domain"/>
    <property type="match status" value="1"/>
</dbReference>
<dbReference type="PROSITE" id="PS01202">
    <property type="entry name" value="MAP_2"/>
    <property type="match status" value="1"/>
</dbReference>